<evidence type="ECO:0000255" key="1">
    <source>
        <dbReference type="HAMAP-Rule" id="MF_00175"/>
    </source>
</evidence>
<evidence type="ECO:0000255" key="2">
    <source>
        <dbReference type="PROSITE-ProRule" id="PRU01250"/>
    </source>
</evidence>
<sequence length="425" mass="47449">MAKYDDHKQLKCSFCGKTQDQVRRLVAGPGVYICDECIELCQEIINEEFEEDMDMAMRDLPKPKEIKAFLDQYVIGQDRAKKALAVAVYNHYKRINSKVKSDDVELQKSNILLLGPTGSGKTLLAQTLAKLLNVPFAIADATTLTEAGYVGEDVENILLRLIQAADYDIERAEKGIIYIDEIDKIARKSENPSITRDVSGEGVQQALLKILEGTIANVPPQGGRKHPHQEFIQIDTTNILFICGGAFEGIDKIIESRIGKKSLGFGAEVQSKKEKDVGEILKHIMPEDLLKFGMIPEFIGRVPIVVTLDPLTKDDLVRILTEPKNALVKQYEKLFEMDGVKLEFEKKALDLIAEMALERGTGARGLRAILEDIMLDVMYEIPSDETIEKCIITEETVRKIAPPTLVYADAQKIGRKKAKKTESVS</sequence>
<keyword id="KW-0067">ATP-binding</keyword>
<keyword id="KW-0143">Chaperone</keyword>
<keyword id="KW-0479">Metal-binding</keyword>
<keyword id="KW-0547">Nucleotide-binding</keyword>
<keyword id="KW-1185">Reference proteome</keyword>
<keyword id="KW-0862">Zinc</keyword>
<feature type="chain" id="PRO_0000160446" description="ATP-dependent Clp protease ATP-binding subunit ClpX">
    <location>
        <begin position="1"/>
        <end position="425"/>
    </location>
</feature>
<feature type="domain" description="ClpX-type ZB" evidence="2">
    <location>
        <begin position="1"/>
        <end position="53"/>
    </location>
</feature>
<feature type="binding site" evidence="2">
    <location>
        <position position="12"/>
    </location>
    <ligand>
        <name>Zn(2+)</name>
        <dbReference type="ChEBI" id="CHEBI:29105"/>
    </ligand>
</feature>
<feature type="binding site" evidence="2">
    <location>
        <position position="15"/>
    </location>
    <ligand>
        <name>Zn(2+)</name>
        <dbReference type="ChEBI" id="CHEBI:29105"/>
    </ligand>
</feature>
<feature type="binding site" evidence="2">
    <location>
        <position position="34"/>
    </location>
    <ligand>
        <name>Zn(2+)</name>
        <dbReference type="ChEBI" id="CHEBI:29105"/>
    </ligand>
</feature>
<feature type="binding site" evidence="2">
    <location>
        <position position="37"/>
    </location>
    <ligand>
        <name>Zn(2+)</name>
        <dbReference type="ChEBI" id="CHEBI:29105"/>
    </ligand>
</feature>
<feature type="binding site" evidence="1">
    <location>
        <begin position="116"/>
        <end position="123"/>
    </location>
    <ligand>
        <name>ATP</name>
        <dbReference type="ChEBI" id="CHEBI:30616"/>
    </ligand>
</feature>
<comment type="function">
    <text evidence="1">ATP-dependent specificity component of the Clp protease. It directs the protease to specific substrates. Can perform chaperone functions in the absence of ClpP.</text>
</comment>
<comment type="subunit">
    <text evidence="1">Component of the ClpX-ClpP complex. Forms a hexameric ring that, in the presence of ATP, binds to fourteen ClpP subunits assembled into a disk-like structure with a central cavity, resembling the structure of eukaryotic proteasomes.</text>
</comment>
<comment type="similarity">
    <text evidence="1">Belongs to the ClpX chaperone family.</text>
</comment>
<proteinExistence type="inferred from homology"/>
<protein>
    <recommendedName>
        <fullName evidence="1">ATP-dependent Clp protease ATP-binding subunit ClpX</fullName>
    </recommendedName>
</protein>
<accession>Q8RC24</accession>
<organism>
    <name type="scientific">Caldanaerobacter subterraneus subsp. tengcongensis (strain DSM 15242 / JCM 11007 / NBRC 100824 / MB4)</name>
    <name type="common">Thermoanaerobacter tengcongensis</name>
    <dbReference type="NCBI Taxonomy" id="273068"/>
    <lineage>
        <taxon>Bacteria</taxon>
        <taxon>Bacillati</taxon>
        <taxon>Bacillota</taxon>
        <taxon>Clostridia</taxon>
        <taxon>Thermoanaerobacterales</taxon>
        <taxon>Thermoanaerobacteraceae</taxon>
        <taxon>Caldanaerobacter</taxon>
    </lineage>
</organism>
<reference key="1">
    <citation type="journal article" date="2002" name="Genome Res.">
        <title>A complete sequence of the T. tengcongensis genome.</title>
        <authorList>
            <person name="Bao Q."/>
            <person name="Tian Y."/>
            <person name="Li W."/>
            <person name="Xu Z."/>
            <person name="Xuan Z."/>
            <person name="Hu S."/>
            <person name="Dong W."/>
            <person name="Yang J."/>
            <person name="Chen Y."/>
            <person name="Xue Y."/>
            <person name="Xu Y."/>
            <person name="Lai X."/>
            <person name="Huang L."/>
            <person name="Dong X."/>
            <person name="Ma Y."/>
            <person name="Ling L."/>
            <person name="Tan H."/>
            <person name="Chen R."/>
            <person name="Wang J."/>
            <person name="Yu J."/>
            <person name="Yang H."/>
        </authorList>
    </citation>
    <scope>NUCLEOTIDE SEQUENCE [LARGE SCALE GENOMIC DNA]</scope>
    <source>
        <strain>DSM 15242 / JCM 11007 / NBRC 100824 / MB4</strain>
    </source>
</reference>
<name>CLPX_CALS4</name>
<gene>
    <name evidence="1" type="primary">clpX</name>
    <name type="ordered locus">TTE0626</name>
</gene>
<dbReference type="EMBL" id="AE008691">
    <property type="protein sequence ID" value="AAM23895.1"/>
    <property type="molecule type" value="Genomic_DNA"/>
</dbReference>
<dbReference type="RefSeq" id="WP_009610844.1">
    <property type="nucleotide sequence ID" value="NC_003869.1"/>
</dbReference>
<dbReference type="SMR" id="Q8RC24"/>
<dbReference type="STRING" id="273068.TTE0626"/>
<dbReference type="KEGG" id="tte:TTE0626"/>
<dbReference type="eggNOG" id="COG1219">
    <property type="taxonomic scope" value="Bacteria"/>
</dbReference>
<dbReference type="HOGENOM" id="CLU_014218_8_2_9"/>
<dbReference type="OrthoDB" id="9804062at2"/>
<dbReference type="Proteomes" id="UP000000555">
    <property type="component" value="Chromosome"/>
</dbReference>
<dbReference type="GO" id="GO:0009376">
    <property type="term" value="C:HslUV protease complex"/>
    <property type="evidence" value="ECO:0007669"/>
    <property type="project" value="TreeGrafter"/>
</dbReference>
<dbReference type="GO" id="GO:0005524">
    <property type="term" value="F:ATP binding"/>
    <property type="evidence" value="ECO:0007669"/>
    <property type="project" value="UniProtKB-UniRule"/>
</dbReference>
<dbReference type="GO" id="GO:0016887">
    <property type="term" value="F:ATP hydrolysis activity"/>
    <property type="evidence" value="ECO:0007669"/>
    <property type="project" value="InterPro"/>
</dbReference>
<dbReference type="GO" id="GO:0140662">
    <property type="term" value="F:ATP-dependent protein folding chaperone"/>
    <property type="evidence" value="ECO:0007669"/>
    <property type="project" value="InterPro"/>
</dbReference>
<dbReference type="GO" id="GO:0046983">
    <property type="term" value="F:protein dimerization activity"/>
    <property type="evidence" value="ECO:0007669"/>
    <property type="project" value="InterPro"/>
</dbReference>
<dbReference type="GO" id="GO:0051082">
    <property type="term" value="F:unfolded protein binding"/>
    <property type="evidence" value="ECO:0007669"/>
    <property type="project" value="UniProtKB-UniRule"/>
</dbReference>
<dbReference type="GO" id="GO:0008270">
    <property type="term" value="F:zinc ion binding"/>
    <property type="evidence" value="ECO:0007669"/>
    <property type="project" value="InterPro"/>
</dbReference>
<dbReference type="GO" id="GO:0051301">
    <property type="term" value="P:cell division"/>
    <property type="evidence" value="ECO:0007669"/>
    <property type="project" value="TreeGrafter"/>
</dbReference>
<dbReference type="GO" id="GO:0051603">
    <property type="term" value="P:proteolysis involved in protein catabolic process"/>
    <property type="evidence" value="ECO:0007669"/>
    <property type="project" value="TreeGrafter"/>
</dbReference>
<dbReference type="CDD" id="cd19497">
    <property type="entry name" value="RecA-like_ClpX"/>
    <property type="match status" value="1"/>
</dbReference>
<dbReference type="FunFam" id="1.10.8.60:FF:000002">
    <property type="entry name" value="ATP-dependent Clp protease ATP-binding subunit ClpX"/>
    <property type="match status" value="1"/>
</dbReference>
<dbReference type="FunFam" id="3.40.50.300:FF:000005">
    <property type="entry name" value="ATP-dependent Clp protease ATP-binding subunit ClpX"/>
    <property type="match status" value="1"/>
</dbReference>
<dbReference type="Gene3D" id="1.10.8.60">
    <property type="match status" value="1"/>
</dbReference>
<dbReference type="Gene3D" id="6.20.220.10">
    <property type="entry name" value="ClpX chaperone, C4-type zinc finger domain"/>
    <property type="match status" value="1"/>
</dbReference>
<dbReference type="Gene3D" id="3.40.50.300">
    <property type="entry name" value="P-loop containing nucleotide triphosphate hydrolases"/>
    <property type="match status" value="1"/>
</dbReference>
<dbReference type="HAMAP" id="MF_00175">
    <property type="entry name" value="ClpX"/>
    <property type="match status" value="1"/>
</dbReference>
<dbReference type="InterPro" id="IPR003593">
    <property type="entry name" value="AAA+_ATPase"/>
</dbReference>
<dbReference type="InterPro" id="IPR050052">
    <property type="entry name" value="ATP-dep_Clp_protease_ClpX"/>
</dbReference>
<dbReference type="InterPro" id="IPR003959">
    <property type="entry name" value="ATPase_AAA_core"/>
</dbReference>
<dbReference type="InterPro" id="IPR019489">
    <property type="entry name" value="Clp_ATPase_C"/>
</dbReference>
<dbReference type="InterPro" id="IPR004487">
    <property type="entry name" value="Clp_protease_ATP-bd_su_ClpX"/>
</dbReference>
<dbReference type="InterPro" id="IPR046425">
    <property type="entry name" value="ClpX_bact"/>
</dbReference>
<dbReference type="InterPro" id="IPR027417">
    <property type="entry name" value="P-loop_NTPase"/>
</dbReference>
<dbReference type="InterPro" id="IPR010603">
    <property type="entry name" value="Znf_CppX_C4"/>
</dbReference>
<dbReference type="InterPro" id="IPR038366">
    <property type="entry name" value="Znf_CppX_C4_sf"/>
</dbReference>
<dbReference type="NCBIfam" id="TIGR00382">
    <property type="entry name" value="clpX"/>
    <property type="match status" value="1"/>
</dbReference>
<dbReference type="NCBIfam" id="NF003745">
    <property type="entry name" value="PRK05342.1"/>
    <property type="match status" value="1"/>
</dbReference>
<dbReference type="PANTHER" id="PTHR48102:SF7">
    <property type="entry name" value="ATP-DEPENDENT CLP PROTEASE ATP-BINDING SUBUNIT CLPX-LIKE, MITOCHONDRIAL"/>
    <property type="match status" value="1"/>
</dbReference>
<dbReference type="PANTHER" id="PTHR48102">
    <property type="entry name" value="ATP-DEPENDENT CLP PROTEASE ATP-BINDING SUBUNIT CLPX-LIKE, MITOCHONDRIAL-RELATED"/>
    <property type="match status" value="1"/>
</dbReference>
<dbReference type="Pfam" id="PF07724">
    <property type="entry name" value="AAA_2"/>
    <property type="match status" value="1"/>
</dbReference>
<dbReference type="Pfam" id="PF10431">
    <property type="entry name" value="ClpB_D2-small"/>
    <property type="match status" value="1"/>
</dbReference>
<dbReference type="Pfam" id="PF06689">
    <property type="entry name" value="zf-C4_ClpX"/>
    <property type="match status" value="1"/>
</dbReference>
<dbReference type="SMART" id="SM00382">
    <property type="entry name" value="AAA"/>
    <property type="match status" value="1"/>
</dbReference>
<dbReference type="SMART" id="SM01086">
    <property type="entry name" value="ClpB_D2-small"/>
    <property type="match status" value="1"/>
</dbReference>
<dbReference type="SMART" id="SM00994">
    <property type="entry name" value="zf-C4_ClpX"/>
    <property type="match status" value="1"/>
</dbReference>
<dbReference type="SUPFAM" id="SSF57716">
    <property type="entry name" value="Glucocorticoid receptor-like (DNA-binding domain)"/>
    <property type="match status" value="1"/>
</dbReference>
<dbReference type="SUPFAM" id="SSF52540">
    <property type="entry name" value="P-loop containing nucleoside triphosphate hydrolases"/>
    <property type="match status" value="1"/>
</dbReference>
<dbReference type="PROSITE" id="PS51902">
    <property type="entry name" value="CLPX_ZB"/>
    <property type="match status" value="1"/>
</dbReference>